<keyword id="KW-0044">Antibiotic</keyword>
<keyword id="KW-0929">Antimicrobial</keyword>
<keyword id="KW-0078">Bacteriocin</keyword>
<keyword id="KW-0964">Secreted</keyword>
<evidence type="ECO:0000269" key="1">
    <source>
    </source>
</evidence>
<evidence type="ECO:0000305" key="2"/>
<organism>
    <name type="scientific">Streptococcus uberis</name>
    <dbReference type="NCBI Taxonomy" id="1349"/>
    <lineage>
        <taxon>Bacteria</taxon>
        <taxon>Bacillati</taxon>
        <taxon>Bacillota</taxon>
        <taxon>Bacilli</taxon>
        <taxon>Lactobacillales</taxon>
        <taxon>Streptococcaceae</taxon>
        <taxon>Streptococcus</taxon>
    </lineage>
</organism>
<reference key="1">
    <citation type="journal article" date="2007" name="Microbiology">
        <title>Uberolysin: a novel cyclic bacteriocin produced by Streptococcus uberis.</title>
        <authorList>
            <person name="Wirawan R.E."/>
            <person name="Swanson K.M."/>
            <person name="Kleffmann T."/>
            <person name="Jack R.W."/>
            <person name="Tagg J.R."/>
        </authorList>
    </citation>
    <scope>NUCLEOTIDE SEQUENCE [GENOMIC DNA]</scope>
    <scope>FUNCTION</scope>
    <scope>MASS SPECTROMETRY</scope>
</reference>
<accession>A5H1G9</accession>
<proteinExistence type="evidence at protein level"/>
<name>UBLA_STRUB</name>
<sequence length="76" mass="7781">MDILLELAGYTGIASGTAKKVVDAIDKGAAAFVIISIISTVISAGALGAVSASADFIILTVKNYISRNLKAQAVIW</sequence>
<comment type="function">
    <text evidence="1">Cyclopeptide antibiotic with bacteriolytic activity against most streptococci (except S.rattus and S.mutans), Listeria spp., enterococci and staphylococci.</text>
</comment>
<comment type="subcellular location">
    <subcellularLocation>
        <location>Secreted</location>
    </subcellularLocation>
</comment>
<comment type="mass spectrometry" mass="7047.97" error="0.09" method="Electrospray" evidence="1"/>
<comment type="mass spectrometry" mass="7043.94" method="MALDI" evidence="1">
    <text>Monoisotopic mass.</text>
</comment>
<comment type="similarity">
    <text evidence="2">Belongs to the bacteriocin class V family.</text>
</comment>
<dbReference type="EMBL" id="DQ650653">
    <property type="protein sequence ID" value="ABG48503.1"/>
    <property type="molecule type" value="Genomic_DNA"/>
</dbReference>
<dbReference type="RefSeq" id="WP_012657601.1">
    <property type="nucleotide sequence ID" value="NZ_WUBX01000003.1"/>
</dbReference>
<dbReference type="SMR" id="A5H1G9"/>
<dbReference type="TCDB" id="1.C.90.1.3">
    <property type="family name" value="the carnocyclin a (carnocyclin) family"/>
</dbReference>
<dbReference type="GO" id="GO:0005576">
    <property type="term" value="C:extracellular region"/>
    <property type="evidence" value="ECO:0007669"/>
    <property type="project" value="UniProtKB-SubCell"/>
</dbReference>
<dbReference type="GO" id="GO:0042742">
    <property type="term" value="P:defense response to bacterium"/>
    <property type="evidence" value="ECO:0007669"/>
    <property type="project" value="UniProtKB-KW"/>
</dbReference>
<dbReference type="GO" id="GO:0031640">
    <property type="term" value="P:killing of cells of another organism"/>
    <property type="evidence" value="ECO:0007669"/>
    <property type="project" value="UniProtKB-KW"/>
</dbReference>
<dbReference type="Gene3D" id="1.20.225.10">
    <property type="entry name" value="Bacteriocin AS-48"/>
    <property type="match status" value="1"/>
</dbReference>
<dbReference type="InterPro" id="IPR009086">
    <property type="entry name" value="Bacteriocin_AS48"/>
</dbReference>
<dbReference type="InterPro" id="IPR020038">
    <property type="entry name" value="Circ_bacteriocin"/>
</dbReference>
<dbReference type="NCBIfam" id="TIGR03651">
    <property type="entry name" value="circ_ocin_uber"/>
    <property type="match status" value="1"/>
</dbReference>
<dbReference type="Pfam" id="PF09221">
    <property type="entry name" value="Bacteriocin_IId"/>
    <property type="match status" value="1"/>
</dbReference>
<protein>
    <recommendedName>
        <fullName>Bacteriocin uberolysin</fullName>
    </recommendedName>
</protein>
<feature type="propeptide" id="PRO_0000326412">
    <location>
        <begin position="1"/>
        <end position="6"/>
    </location>
</feature>
<feature type="peptide" id="PRO_0000326413" description="Bacteriocin uberolysin">
    <location>
        <begin position="7"/>
        <end position="76"/>
    </location>
</feature>
<feature type="cross-link" description="Cyclopeptide (Leu-Trp)">
    <location>
        <begin position="7"/>
        <end position="76"/>
    </location>
</feature>
<gene>
    <name type="primary">ublA</name>
</gene>